<comment type="function">
    <text evidence="4 5 6">Amino acid aminotransferase important for the metabolism of amino acids and Krebs-cycle related organic acids. No activity with D-Asp or D-Ala as amino donors. In plants, it is involved in nitrogen metabolism and in aspects of carbon and energy metabolism.</text>
</comment>
<comment type="catalytic activity">
    <reaction evidence="4 6 7">
        <text>L-aspartate + 2-oxoglutarate = oxaloacetate + L-glutamate</text>
        <dbReference type="Rhea" id="RHEA:21824"/>
        <dbReference type="ChEBI" id="CHEBI:16452"/>
        <dbReference type="ChEBI" id="CHEBI:16810"/>
        <dbReference type="ChEBI" id="CHEBI:29985"/>
        <dbReference type="ChEBI" id="CHEBI:29991"/>
        <dbReference type="EC" id="2.6.1.1"/>
    </reaction>
</comment>
<comment type="cofactor">
    <cofactor>
        <name>pyridoxal 5'-phosphate</name>
        <dbReference type="ChEBI" id="CHEBI:597326"/>
    </cofactor>
</comment>
<comment type="biophysicochemical properties">
    <kinetics>
        <KM evidence="4">1 mM for L-aspartate</KM>
        <KM evidence="6">2.85 mM for L-aspartate</KM>
        <KM evidence="6">0.09 mM for 2-oxoglutarate</KM>
        <KM evidence="6">11.6 mM for L-glutamate</KM>
        <KM evidence="6">0.02 mM for oxaloacetate</KM>
        <text evidence="6">kcat is 176 sec(-1) for the forward reaction. kcat is 279 sec(-1) for the reverse reaction.</text>
    </kinetics>
</comment>
<comment type="subunit">
    <text evidence="1">Homodimer.</text>
</comment>
<comment type="subcellular location">
    <subcellularLocation>
        <location>Plastid</location>
        <location>Chloroplast</location>
    </subcellularLocation>
    <subcellularLocation>
        <location evidence="9">Plastid</location>
        <location evidence="9">Amyloplast</location>
    </subcellularLocation>
</comment>
<comment type="alternative products">
    <event type="alternative splicing"/>
    <isoform>
        <id>P46248-1</id>
        <name>1</name>
        <sequence type="displayed"/>
    </isoform>
    <text>A number of isoforms are produced. According to EST sequences.</text>
</comment>
<comment type="miscellaneous">
    <text>In eukaryotes there are cytoplasmic, mitochondrial and chloroplastic isozymes.</text>
</comment>
<comment type="similarity">
    <text evidence="11">Belongs to the class-I pyridoxal-phosphate-dependent aminotransferase family.</text>
</comment>
<keyword id="KW-0025">Alternative splicing</keyword>
<keyword id="KW-0032">Aminotransferase</keyword>
<keyword id="KW-0035">Amyloplast</keyword>
<keyword id="KW-0150">Chloroplast</keyword>
<keyword id="KW-0934">Plastid</keyword>
<keyword id="KW-0663">Pyridoxal phosphate</keyword>
<keyword id="KW-1185">Reference proteome</keyword>
<keyword id="KW-0808">Transferase</keyword>
<keyword id="KW-0809">Transit peptide</keyword>
<dbReference type="EC" id="2.6.1.1"/>
<dbReference type="EMBL" id="X81026">
    <property type="protein sequence ID" value="CAA56932.1"/>
    <property type="molecule type" value="mRNA"/>
</dbReference>
<dbReference type="EMBL" id="X91865">
    <property type="protein sequence ID" value="CAA62972.1"/>
    <property type="molecule type" value="Genomic_DNA"/>
</dbReference>
<dbReference type="EMBL" id="AL021636">
    <property type="protein sequence ID" value="CAA16590.1"/>
    <property type="molecule type" value="Genomic_DNA"/>
</dbReference>
<dbReference type="EMBL" id="AL161580">
    <property type="protein sequence ID" value="CAB79917.1"/>
    <property type="molecule type" value="Genomic_DNA"/>
</dbReference>
<dbReference type="EMBL" id="CP002687">
    <property type="protein sequence ID" value="AEE85987.1"/>
    <property type="molecule type" value="Genomic_DNA"/>
</dbReference>
<dbReference type="EMBL" id="CP002687">
    <property type="protein sequence ID" value="AEE85988.1"/>
    <property type="molecule type" value="Genomic_DNA"/>
</dbReference>
<dbReference type="EMBL" id="AY054660">
    <property type="protein sequence ID" value="AAK96851.1"/>
    <property type="molecule type" value="mRNA"/>
</dbReference>
<dbReference type="EMBL" id="AY081506">
    <property type="protein sequence ID" value="AAM10068.1"/>
    <property type="molecule type" value="mRNA"/>
</dbReference>
<dbReference type="EMBL" id="AY084314">
    <property type="protein sequence ID" value="AAM67272.1"/>
    <property type="molecule type" value="mRNA"/>
</dbReference>
<dbReference type="PIR" id="T04646">
    <property type="entry name" value="T04646"/>
</dbReference>
<dbReference type="RefSeq" id="NP_194927.1">
    <molecule id="P46248-1"/>
    <property type="nucleotide sequence ID" value="NM_119351.3"/>
</dbReference>
<dbReference type="RefSeq" id="NP_849483.1">
    <molecule id="P46248-1"/>
    <property type="nucleotide sequence ID" value="NM_179152.3"/>
</dbReference>
<dbReference type="SMR" id="P46248"/>
<dbReference type="BioGRID" id="14616">
    <property type="interactions" value="13"/>
</dbReference>
<dbReference type="FunCoup" id="P46248">
    <property type="interactions" value="1427"/>
</dbReference>
<dbReference type="IntAct" id="P46248">
    <property type="interactions" value="1"/>
</dbReference>
<dbReference type="STRING" id="3702.P46248"/>
<dbReference type="GlyGen" id="P46248">
    <property type="glycosylation" value="1 site"/>
</dbReference>
<dbReference type="iPTMnet" id="P46248"/>
<dbReference type="MetOSite" id="P46248"/>
<dbReference type="PaxDb" id="3702-AT4G31990.3"/>
<dbReference type="ProteomicsDB" id="245078">
    <molecule id="P46248-1"/>
</dbReference>
<dbReference type="EnsemblPlants" id="AT4G31990.1">
    <molecule id="P46248-1"/>
    <property type="protein sequence ID" value="AT4G31990.1"/>
    <property type="gene ID" value="AT4G31990"/>
</dbReference>
<dbReference type="EnsemblPlants" id="AT4G31990.2">
    <molecule id="P46248-1"/>
    <property type="protein sequence ID" value="AT4G31990.2"/>
    <property type="gene ID" value="AT4G31990"/>
</dbReference>
<dbReference type="GeneID" id="829330"/>
<dbReference type="Gramene" id="AT4G31990.1">
    <molecule id="P46248-1"/>
    <property type="protein sequence ID" value="AT4G31990.1"/>
    <property type="gene ID" value="AT4G31990"/>
</dbReference>
<dbReference type="Gramene" id="AT4G31990.2">
    <molecule id="P46248-1"/>
    <property type="protein sequence ID" value="AT4G31990.2"/>
    <property type="gene ID" value="AT4G31990"/>
</dbReference>
<dbReference type="KEGG" id="ath:AT4G31990"/>
<dbReference type="Araport" id="AT4G31990"/>
<dbReference type="TAIR" id="AT4G31990">
    <property type="gene designation" value="ASP5"/>
</dbReference>
<dbReference type="eggNOG" id="KOG1411">
    <property type="taxonomic scope" value="Eukaryota"/>
</dbReference>
<dbReference type="InParanoid" id="P46248"/>
<dbReference type="PhylomeDB" id="P46248"/>
<dbReference type="SABIO-RK" id="P46248"/>
<dbReference type="CD-CODE" id="4299E36E">
    <property type="entry name" value="Nucleolus"/>
</dbReference>
<dbReference type="PRO" id="PR:P46248"/>
<dbReference type="Proteomes" id="UP000006548">
    <property type="component" value="Chromosome 4"/>
</dbReference>
<dbReference type="ExpressionAtlas" id="P46248">
    <property type="expression patterns" value="baseline and differential"/>
</dbReference>
<dbReference type="GO" id="GO:0009501">
    <property type="term" value="C:amyloplast"/>
    <property type="evidence" value="ECO:0007669"/>
    <property type="project" value="UniProtKB-SubCell"/>
</dbReference>
<dbReference type="GO" id="GO:0009507">
    <property type="term" value="C:chloroplast"/>
    <property type="evidence" value="ECO:0007669"/>
    <property type="project" value="UniProtKB-SubCell"/>
</dbReference>
<dbReference type="GO" id="GO:0004069">
    <property type="term" value="F:L-aspartate:2-oxoglutarate aminotransferase activity"/>
    <property type="evidence" value="ECO:0000250"/>
    <property type="project" value="UniProtKB"/>
</dbReference>
<dbReference type="GO" id="GO:0030170">
    <property type="term" value="F:pyridoxal phosphate binding"/>
    <property type="evidence" value="ECO:0007669"/>
    <property type="project" value="InterPro"/>
</dbReference>
<dbReference type="GO" id="GO:0006103">
    <property type="term" value="P:2-oxoglutarate metabolic process"/>
    <property type="evidence" value="ECO:0000250"/>
    <property type="project" value="UniProtKB"/>
</dbReference>
<dbReference type="GO" id="GO:0006531">
    <property type="term" value="P:aspartate metabolic process"/>
    <property type="evidence" value="ECO:0000250"/>
    <property type="project" value="UniProtKB"/>
</dbReference>
<dbReference type="GO" id="GO:0009058">
    <property type="term" value="P:biosynthetic process"/>
    <property type="evidence" value="ECO:0007669"/>
    <property type="project" value="InterPro"/>
</dbReference>
<dbReference type="GO" id="GO:0006536">
    <property type="term" value="P:glutamate metabolic process"/>
    <property type="evidence" value="ECO:0000250"/>
    <property type="project" value="UniProtKB"/>
</dbReference>
<dbReference type="CDD" id="cd00609">
    <property type="entry name" value="AAT_like"/>
    <property type="match status" value="1"/>
</dbReference>
<dbReference type="FunFam" id="3.40.640.10:FF:000015">
    <property type="entry name" value="Aspartate aminotransferase"/>
    <property type="match status" value="1"/>
</dbReference>
<dbReference type="FunFam" id="3.90.1150.10:FF:000001">
    <property type="entry name" value="Aspartate aminotransferase"/>
    <property type="match status" value="1"/>
</dbReference>
<dbReference type="Gene3D" id="3.90.1150.10">
    <property type="entry name" value="Aspartate Aminotransferase, domain 1"/>
    <property type="match status" value="1"/>
</dbReference>
<dbReference type="Gene3D" id="3.40.640.10">
    <property type="entry name" value="Type I PLP-dependent aspartate aminotransferase-like (Major domain)"/>
    <property type="match status" value="1"/>
</dbReference>
<dbReference type="InterPro" id="IPR004839">
    <property type="entry name" value="Aminotransferase_I/II_large"/>
</dbReference>
<dbReference type="InterPro" id="IPR000796">
    <property type="entry name" value="Asp_trans"/>
</dbReference>
<dbReference type="InterPro" id="IPR004838">
    <property type="entry name" value="NHTrfase_class1_PyrdxlP-BS"/>
</dbReference>
<dbReference type="InterPro" id="IPR015424">
    <property type="entry name" value="PyrdxlP-dep_Trfase"/>
</dbReference>
<dbReference type="InterPro" id="IPR015421">
    <property type="entry name" value="PyrdxlP-dep_Trfase_major"/>
</dbReference>
<dbReference type="InterPro" id="IPR015422">
    <property type="entry name" value="PyrdxlP-dep_Trfase_small"/>
</dbReference>
<dbReference type="NCBIfam" id="NF006719">
    <property type="entry name" value="PRK09257.1"/>
    <property type="match status" value="1"/>
</dbReference>
<dbReference type="PANTHER" id="PTHR11879">
    <property type="entry name" value="ASPARTATE AMINOTRANSFERASE"/>
    <property type="match status" value="1"/>
</dbReference>
<dbReference type="PANTHER" id="PTHR11879:SF46">
    <property type="entry name" value="ASPARTATE AMINOTRANSFERASE, CYTOPLASMIC"/>
    <property type="match status" value="1"/>
</dbReference>
<dbReference type="Pfam" id="PF00155">
    <property type="entry name" value="Aminotran_1_2"/>
    <property type="match status" value="1"/>
</dbReference>
<dbReference type="PRINTS" id="PR00799">
    <property type="entry name" value="TRANSAMINASE"/>
</dbReference>
<dbReference type="SUPFAM" id="SSF53383">
    <property type="entry name" value="PLP-dependent transferases"/>
    <property type="match status" value="1"/>
</dbReference>
<dbReference type="PROSITE" id="PS00105">
    <property type="entry name" value="AA_TRANSFER_CLASS_1"/>
    <property type="match status" value="1"/>
</dbReference>
<sequence>MASLMLSLGSTSLLPREINKDKLKLGTSASNPFLKAKSFSRVTMTVAVKPSRFEGITMAPPDPILGVSEAFKADTNGMKLNLGVGAYRTEELQPYVLNVVKKAENLMLERGDNKEYLPIEGLAAFNKATAELLFGAGHPVIKEQRVATIQGLSGTGSLRLAAALIERYFPGAKVVISSPTWGNHKNIFNDAKVPWSEYRYYDPKTIGLDFEGMIADIKEAPEGSFILLHGCAHNPTGIDPTPEQWVKIADVIQEKNHIPFFDVAYQGFASGSLDEDAASVRLFAERGMEFFVAQSYSKNLGLYAERIGAINVVCSSADAATRVKSQLKRIARPMYSNPPVHGARIVANVVGDVTMFSEWKAEMEMMAGRIKTVRQELYDSLVSKDKSGKDWSFILKQIGMFSFTGLNKAQSDNMTDKWHVYMTKDGRISLAGLSLAKCEYLADAIIDSYHNVS</sequence>
<name>AAT5_ARATH</name>
<evidence type="ECO:0000250" key="1"/>
<evidence type="ECO:0000250" key="2">
    <source>
        <dbReference type="UniProtKB" id="P23542"/>
    </source>
</evidence>
<evidence type="ECO:0000269" key="3">
    <source>
    </source>
</evidence>
<evidence type="ECO:0000269" key="4">
    <source>
    </source>
</evidence>
<evidence type="ECO:0000269" key="5">
    <source>
    </source>
</evidence>
<evidence type="ECO:0000269" key="6">
    <source>
    </source>
</evidence>
<evidence type="ECO:0000269" key="7">
    <source>
    </source>
</evidence>
<evidence type="ECO:0000303" key="8">
    <source>
    </source>
</evidence>
<evidence type="ECO:0000303" key="9">
    <source>
    </source>
</evidence>
<evidence type="ECO:0000303" key="10">
    <source>
    </source>
</evidence>
<evidence type="ECO:0000305" key="11"/>
<evidence type="ECO:0000312" key="12">
    <source>
        <dbReference type="Araport" id="AT4G31990"/>
    </source>
</evidence>
<gene>
    <name type="primary">ASP5</name>
    <name evidence="8" type="synonym">AAT1</name>
    <name evidence="10" type="synonym">AAT3</name>
    <name evidence="12" type="ordered locus">At4g31990</name>
    <name type="ORF">F10N7.200</name>
</gene>
<accession>P46248</accession>
<accession>O49392</accession>
<accession>Q8LGE6</accession>
<reference key="1">
    <citation type="journal article" date="1995" name="Plant Mol. Biol.">
        <title>Isolation, characterisation and expression of a cDNA clone encoding plastid aspartate aminotransferase from Arabidopsis thaliana.</title>
        <authorList>
            <person name="Wilkie S.E."/>
            <person name="Roper J.M."/>
            <person name="Smith A.G."/>
            <person name="Warren M.J."/>
        </authorList>
    </citation>
    <scope>NUCLEOTIDE SEQUENCE [MRNA]</scope>
    <scope>FUNCTION</scope>
    <source>
        <strain>cv. C24</strain>
        <tissue>Leaf</tissue>
    </source>
</reference>
<reference key="2">
    <citation type="journal article" date="1996" name="Biochem. J.">
        <title>Chloroplastic aspartate aminotransferase from Arabidopsis thaliana: an examination of the relationship between the structure of the gene and the spatial structure of the protein.</title>
        <authorList>
            <person name="Wilkie S.E."/>
            <person name="Lambert R."/>
            <person name="Warren M.J."/>
        </authorList>
    </citation>
    <scope>NUCLEOTIDE SEQUENCE [GENOMIC DNA]</scope>
    <scope>3D-STRUCTURE MODELING</scope>
    <source>
        <strain>cv. Landsberg erecta</strain>
        <tissue>Leaf</tissue>
    </source>
</reference>
<reference key="3">
    <citation type="journal article" date="1999" name="Nature">
        <title>Sequence and analysis of chromosome 4 of the plant Arabidopsis thaliana.</title>
        <authorList>
            <person name="Mayer K.F.X."/>
            <person name="Schueller C."/>
            <person name="Wambutt R."/>
            <person name="Murphy G."/>
            <person name="Volckaert G."/>
            <person name="Pohl T."/>
            <person name="Duesterhoeft A."/>
            <person name="Stiekema W."/>
            <person name="Entian K.-D."/>
            <person name="Terryn N."/>
            <person name="Harris B."/>
            <person name="Ansorge W."/>
            <person name="Brandt P."/>
            <person name="Grivell L.A."/>
            <person name="Rieger M."/>
            <person name="Weichselgartner M."/>
            <person name="de Simone V."/>
            <person name="Obermaier B."/>
            <person name="Mache R."/>
            <person name="Mueller M."/>
            <person name="Kreis M."/>
            <person name="Delseny M."/>
            <person name="Puigdomenech P."/>
            <person name="Watson M."/>
            <person name="Schmidtheini T."/>
            <person name="Reichert B."/>
            <person name="Portetelle D."/>
            <person name="Perez-Alonso M."/>
            <person name="Boutry M."/>
            <person name="Bancroft I."/>
            <person name="Vos P."/>
            <person name="Hoheisel J."/>
            <person name="Zimmermann W."/>
            <person name="Wedler H."/>
            <person name="Ridley P."/>
            <person name="Langham S.-A."/>
            <person name="McCullagh B."/>
            <person name="Bilham L."/>
            <person name="Robben J."/>
            <person name="van der Schueren J."/>
            <person name="Grymonprez B."/>
            <person name="Chuang Y.-J."/>
            <person name="Vandenbussche F."/>
            <person name="Braeken M."/>
            <person name="Weltjens I."/>
            <person name="Voet M."/>
            <person name="Bastiaens I."/>
            <person name="Aert R."/>
            <person name="Defoor E."/>
            <person name="Weitzenegger T."/>
            <person name="Bothe G."/>
            <person name="Ramsperger U."/>
            <person name="Hilbert H."/>
            <person name="Braun M."/>
            <person name="Holzer E."/>
            <person name="Brandt A."/>
            <person name="Peters S."/>
            <person name="van Staveren M."/>
            <person name="Dirkse W."/>
            <person name="Mooijman P."/>
            <person name="Klein Lankhorst R."/>
            <person name="Rose M."/>
            <person name="Hauf J."/>
            <person name="Koetter P."/>
            <person name="Berneiser S."/>
            <person name="Hempel S."/>
            <person name="Feldpausch M."/>
            <person name="Lamberth S."/>
            <person name="Van den Daele H."/>
            <person name="De Keyser A."/>
            <person name="Buysshaert C."/>
            <person name="Gielen J."/>
            <person name="Villarroel R."/>
            <person name="De Clercq R."/>
            <person name="van Montagu M."/>
            <person name="Rogers J."/>
            <person name="Cronin A."/>
            <person name="Quail M.A."/>
            <person name="Bray-Allen S."/>
            <person name="Clark L."/>
            <person name="Doggett J."/>
            <person name="Hall S."/>
            <person name="Kay M."/>
            <person name="Lennard N."/>
            <person name="McLay K."/>
            <person name="Mayes R."/>
            <person name="Pettett A."/>
            <person name="Rajandream M.A."/>
            <person name="Lyne M."/>
            <person name="Benes V."/>
            <person name="Rechmann S."/>
            <person name="Borkova D."/>
            <person name="Bloecker H."/>
            <person name="Scharfe M."/>
            <person name="Grimm M."/>
            <person name="Loehnert T.-H."/>
            <person name="Dose S."/>
            <person name="de Haan M."/>
            <person name="Maarse A.C."/>
            <person name="Schaefer M."/>
            <person name="Mueller-Auer S."/>
            <person name="Gabel C."/>
            <person name="Fuchs M."/>
            <person name="Fartmann B."/>
            <person name="Granderath K."/>
            <person name="Dauner D."/>
            <person name="Herzl A."/>
            <person name="Neumann S."/>
            <person name="Argiriou A."/>
            <person name="Vitale D."/>
            <person name="Liguori R."/>
            <person name="Piravandi E."/>
            <person name="Massenet O."/>
            <person name="Quigley F."/>
            <person name="Clabauld G."/>
            <person name="Muendlein A."/>
            <person name="Felber R."/>
            <person name="Schnabl S."/>
            <person name="Hiller R."/>
            <person name="Schmidt W."/>
            <person name="Lecharny A."/>
            <person name="Aubourg S."/>
            <person name="Chefdor F."/>
            <person name="Cooke R."/>
            <person name="Berger C."/>
            <person name="Monfort A."/>
            <person name="Casacuberta E."/>
            <person name="Gibbons T."/>
            <person name="Weber N."/>
            <person name="Vandenbol M."/>
            <person name="Bargues M."/>
            <person name="Terol J."/>
            <person name="Torres A."/>
            <person name="Perez-Perez A."/>
            <person name="Purnelle B."/>
            <person name="Bent E."/>
            <person name="Johnson S."/>
            <person name="Tacon D."/>
            <person name="Jesse T."/>
            <person name="Heijnen L."/>
            <person name="Schwarz S."/>
            <person name="Scholler P."/>
            <person name="Heber S."/>
            <person name="Francs P."/>
            <person name="Bielke C."/>
            <person name="Frishman D."/>
            <person name="Haase D."/>
            <person name="Lemcke K."/>
            <person name="Mewes H.-W."/>
            <person name="Stocker S."/>
            <person name="Zaccaria P."/>
            <person name="Bevan M."/>
            <person name="Wilson R.K."/>
            <person name="de la Bastide M."/>
            <person name="Habermann K."/>
            <person name="Parnell L."/>
            <person name="Dedhia N."/>
            <person name="Gnoj L."/>
            <person name="Schutz K."/>
            <person name="Huang E."/>
            <person name="Spiegel L."/>
            <person name="Sekhon M."/>
            <person name="Murray J."/>
            <person name="Sheet P."/>
            <person name="Cordes M."/>
            <person name="Abu-Threideh J."/>
            <person name="Stoneking T."/>
            <person name="Kalicki J."/>
            <person name="Graves T."/>
            <person name="Harmon G."/>
            <person name="Edwards J."/>
            <person name="Latreille P."/>
            <person name="Courtney L."/>
            <person name="Cloud J."/>
            <person name="Abbott A."/>
            <person name="Scott K."/>
            <person name="Johnson D."/>
            <person name="Minx P."/>
            <person name="Bentley D."/>
            <person name="Fulton B."/>
            <person name="Miller N."/>
            <person name="Greco T."/>
            <person name="Kemp K."/>
            <person name="Kramer J."/>
            <person name="Fulton L."/>
            <person name="Mardis E."/>
            <person name="Dante M."/>
            <person name="Pepin K."/>
            <person name="Hillier L.W."/>
            <person name="Nelson J."/>
            <person name="Spieth J."/>
            <person name="Ryan E."/>
            <person name="Andrews S."/>
            <person name="Geisel C."/>
            <person name="Layman D."/>
            <person name="Du H."/>
            <person name="Ali J."/>
            <person name="Berghoff A."/>
            <person name="Jones K."/>
            <person name="Drone K."/>
            <person name="Cotton M."/>
            <person name="Joshu C."/>
            <person name="Antonoiu B."/>
            <person name="Zidanic M."/>
            <person name="Strong C."/>
            <person name="Sun H."/>
            <person name="Lamar B."/>
            <person name="Yordan C."/>
            <person name="Ma P."/>
            <person name="Zhong J."/>
            <person name="Preston R."/>
            <person name="Vil D."/>
            <person name="Shekher M."/>
            <person name="Matero A."/>
            <person name="Shah R."/>
            <person name="Swaby I.K."/>
            <person name="O'Shaughnessy A."/>
            <person name="Rodriguez M."/>
            <person name="Hoffman J."/>
            <person name="Till S."/>
            <person name="Granat S."/>
            <person name="Shohdy N."/>
            <person name="Hasegawa A."/>
            <person name="Hameed A."/>
            <person name="Lodhi M."/>
            <person name="Johnson A."/>
            <person name="Chen E."/>
            <person name="Marra M.A."/>
            <person name="Martienssen R."/>
            <person name="McCombie W.R."/>
        </authorList>
    </citation>
    <scope>NUCLEOTIDE SEQUENCE [LARGE SCALE GENOMIC DNA]</scope>
    <source>
        <strain>cv. Columbia</strain>
    </source>
</reference>
<reference key="4">
    <citation type="journal article" date="2017" name="Plant J.">
        <title>Araport11: a complete reannotation of the Arabidopsis thaliana reference genome.</title>
        <authorList>
            <person name="Cheng C.Y."/>
            <person name="Krishnakumar V."/>
            <person name="Chan A.P."/>
            <person name="Thibaud-Nissen F."/>
            <person name="Schobel S."/>
            <person name="Town C.D."/>
        </authorList>
    </citation>
    <scope>GENOME REANNOTATION</scope>
    <source>
        <strain>cv. Columbia</strain>
    </source>
</reference>
<reference key="5">
    <citation type="journal article" date="2003" name="Science">
        <title>Empirical analysis of transcriptional activity in the Arabidopsis genome.</title>
        <authorList>
            <person name="Yamada K."/>
            <person name="Lim J."/>
            <person name="Dale J.M."/>
            <person name="Chen H."/>
            <person name="Shinn P."/>
            <person name="Palm C.J."/>
            <person name="Southwick A.M."/>
            <person name="Wu H.C."/>
            <person name="Kim C.J."/>
            <person name="Nguyen M."/>
            <person name="Pham P.K."/>
            <person name="Cheuk R.F."/>
            <person name="Karlin-Newmann G."/>
            <person name="Liu S.X."/>
            <person name="Lam B."/>
            <person name="Sakano H."/>
            <person name="Wu T."/>
            <person name="Yu G."/>
            <person name="Miranda M."/>
            <person name="Quach H.L."/>
            <person name="Tripp M."/>
            <person name="Chang C.H."/>
            <person name="Lee J.M."/>
            <person name="Toriumi M.J."/>
            <person name="Chan M.M."/>
            <person name="Tang C.C."/>
            <person name="Onodera C.S."/>
            <person name="Deng J.M."/>
            <person name="Akiyama K."/>
            <person name="Ansari Y."/>
            <person name="Arakawa T."/>
            <person name="Banh J."/>
            <person name="Banno F."/>
            <person name="Bowser L."/>
            <person name="Brooks S.Y."/>
            <person name="Carninci P."/>
            <person name="Chao Q."/>
            <person name="Choy N."/>
            <person name="Enju A."/>
            <person name="Goldsmith A.D."/>
            <person name="Gurjal M."/>
            <person name="Hansen N.F."/>
            <person name="Hayashizaki Y."/>
            <person name="Johnson-Hopson C."/>
            <person name="Hsuan V.W."/>
            <person name="Iida K."/>
            <person name="Karnes M."/>
            <person name="Khan S."/>
            <person name="Koesema E."/>
            <person name="Ishida J."/>
            <person name="Jiang P.X."/>
            <person name="Jones T."/>
            <person name="Kawai J."/>
            <person name="Kamiya A."/>
            <person name="Meyers C."/>
            <person name="Nakajima M."/>
            <person name="Narusaka M."/>
            <person name="Seki M."/>
            <person name="Sakurai T."/>
            <person name="Satou M."/>
            <person name="Tamse R."/>
            <person name="Vaysberg M."/>
            <person name="Wallender E.K."/>
            <person name="Wong C."/>
            <person name="Yamamura Y."/>
            <person name="Yuan S."/>
            <person name="Shinozaki K."/>
            <person name="Davis R.W."/>
            <person name="Theologis A."/>
            <person name="Ecker J.R."/>
        </authorList>
    </citation>
    <scope>NUCLEOTIDE SEQUENCE [LARGE SCALE MRNA]</scope>
    <source>
        <strain>cv. Columbia</strain>
    </source>
</reference>
<reference key="6">
    <citation type="submission" date="2002-03" db="EMBL/GenBank/DDBJ databases">
        <title>Full-length cDNA from Arabidopsis thaliana.</title>
        <authorList>
            <person name="Brover V.V."/>
            <person name="Troukhan M.E."/>
            <person name="Alexandrov N.A."/>
            <person name="Lu Y.-P."/>
            <person name="Flavell R.B."/>
            <person name="Feldmann K.A."/>
        </authorList>
    </citation>
    <scope>NUCLEOTIDE SEQUENCE [LARGE SCALE MRNA]</scope>
</reference>
<reference key="7">
    <citation type="journal article" date="1998" name="Genetics">
        <title>Arabidopsis mutants define an in vivo role for isoenzymes of aspartate aminotransferase in plant nitrogen assimilation.</title>
        <authorList>
            <person name="Schultz C.J."/>
            <person name="Hsu M."/>
            <person name="Miesak B."/>
            <person name="Coruzzi G.M."/>
        </authorList>
    </citation>
    <scope>FUNCTION</scope>
</reference>
<reference key="8">
    <citation type="journal article" date="1998" name="Protein Expr. Purif.">
        <title>Recombinant expression, purification, and characterization of three isoenzymes of aspartate aminotransferase from Arabidopsis thaliana.</title>
        <authorList>
            <person name="Wilkie S.E."/>
            <person name="Warren M.J."/>
        </authorList>
    </citation>
    <scope>FUNCTION</scope>
    <scope>CATALYTIC ACTIVITY</scope>
    <scope>BIOPHYSICOCHEMICAL PROPERTIES</scope>
    <scope>SUBCELLULAR LOCATION</scope>
</reference>
<reference key="9">
    <citation type="journal article" date="2002" name="Plant Physiol.">
        <title>Molecular and physiological analysis of Arabidopsis mutants defective in cytosolic or chloroplastic aspartate aminotransferase.</title>
        <authorList>
            <person name="Miesak B.H."/>
            <person name="Coruzzi G.M."/>
        </authorList>
    </citation>
    <scope>FUNCTION</scope>
    <scope>MUTAGENESIS OF PRO-118; GLY-156 AND GLY-342</scope>
</reference>
<reference key="10">
    <citation type="journal article" date="2007" name="Mol. Cell. Proteomics">
        <title>Multidimensional protein identification technology (MudPIT) analysis of ubiquitinated proteins in plants.</title>
        <authorList>
            <person name="Maor R."/>
            <person name="Jones A."/>
            <person name="Nuehse T.S."/>
            <person name="Studholme D.J."/>
            <person name="Peck S.C."/>
            <person name="Shirasu K."/>
        </authorList>
    </citation>
    <scope>IDENTIFICATION BY MASS SPECTROMETRY [LARGE SCALE ANALYSIS]</scope>
    <source>
        <strain>cv. Landsberg erecta</strain>
    </source>
</reference>
<reference key="11">
    <citation type="journal article" date="2008" name="FEBS J.">
        <title>Cloning and functional characterization of Arabidopsis thaliana D-amino acid aminotransferase--D-aspartate behavior during germination.</title>
        <authorList>
            <person name="Funakoshi M."/>
            <person name="Sekine M."/>
            <person name="Katane M."/>
            <person name="Furuchi T."/>
            <person name="Yohda M."/>
            <person name="Yoshikawa T."/>
            <person name="Homma H."/>
        </authorList>
    </citation>
    <scope>FUNCTION</scope>
    <scope>CATALYTIC ACTIVITY</scope>
    <scope>BIOPHYSICOCHEMICAL PROPERTIES</scope>
</reference>
<organism>
    <name type="scientific">Arabidopsis thaliana</name>
    <name type="common">Mouse-ear cress</name>
    <dbReference type="NCBI Taxonomy" id="3702"/>
    <lineage>
        <taxon>Eukaryota</taxon>
        <taxon>Viridiplantae</taxon>
        <taxon>Streptophyta</taxon>
        <taxon>Embryophyta</taxon>
        <taxon>Tracheophyta</taxon>
        <taxon>Spermatophyta</taxon>
        <taxon>Magnoliopsida</taxon>
        <taxon>eudicotyledons</taxon>
        <taxon>Gunneridae</taxon>
        <taxon>Pentapetalae</taxon>
        <taxon>rosids</taxon>
        <taxon>malvids</taxon>
        <taxon>Brassicales</taxon>
        <taxon>Brassicaceae</taxon>
        <taxon>Camelineae</taxon>
        <taxon>Arabidopsis</taxon>
    </lineage>
</organism>
<protein>
    <recommendedName>
        <fullName>Aspartate aminotransferase, chloroplastic</fullName>
        <ecNumber>2.6.1.1</ecNumber>
    </recommendedName>
    <alternativeName>
        <fullName>Transaminase A</fullName>
    </alternativeName>
</protein>
<proteinExistence type="evidence at protein level"/>
<feature type="transit peptide" description="Chloroplast" evidence="11">
    <location>
        <begin position="1"/>
        <end position="44"/>
    </location>
</feature>
<feature type="chain" id="PRO_0000001211" description="Aspartate aminotransferase, chloroplastic">
    <location>
        <begin position="45"/>
        <end position="453"/>
    </location>
</feature>
<feature type="binding site" evidence="2">
    <location>
        <position position="85"/>
    </location>
    <ligand>
        <name>L-aspartate</name>
        <dbReference type="ChEBI" id="CHEBI:29991"/>
    </ligand>
</feature>
<feature type="binding site" evidence="1 2">
    <location>
        <position position="181"/>
    </location>
    <ligand>
        <name>L-aspartate</name>
        <dbReference type="ChEBI" id="CHEBI:29991"/>
    </ligand>
</feature>
<feature type="binding site" evidence="2">
    <location>
        <position position="234"/>
    </location>
    <ligand>
        <name>L-aspartate</name>
        <dbReference type="ChEBI" id="CHEBI:29991"/>
    </ligand>
</feature>
<feature type="binding site" evidence="2">
    <location>
        <position position="427"/>
    </location>
    <ligand>
        <name>L-aspartate</name>
        <dbReference type="ChEBI" id="CHEBI:29991"/>
    </ligand>
</feature>
<feature type="modified residue" description="N6-(pyridoxal phosphate)lysine" evidence="2">
    <location>
        <position position="298"/>
    </location>
</feature>
<feature type="mutagenesis site" description="In aat3-1; loss of function." evidence="3">
    <original>P</original>
    <variation>S</variation>
    <location>
        <position position="118"/>
    </location>
</feature>
<feature type="mutagenesis site" description="In aat3-4; loss of function." evidence="3">
    <original>G</original>
    <variation>S</variation>
    <location>
        <position position="156"/>
    </location>
</feature>
<feature type="mutagenesis site" description="In aat3-2; loss of function." evidence="3">
    <original>G</original>
    <variation>E</variation>
    <location>
        <position position="342"/>
    </location>
</feature>
<feature type="sequence conflict" description="In Ref. 1; CAA56932 and 2; CAA62972." evidence="11" ref="1 2">
    <original>KL</original>
    <variation>NV</variation>
    <location>
        <begin position="22"/>
        <end position="23"/>
    </location>
</feature>
<feature type="sequence conflict" description="In Ref. 6; AAM67272." evidence="11" ref="6">
    <original>A</original>
    <variation>S</variation>
    <location>
        <position position="409"/>
    </location>
</feature>